<comment type="function">
    <text evidence="1">Hydrolyzes ribosome-free peptidyl-tRNAs (with 1 or more amino acids incorporated), which drop off the ribosome during protein synthesis, or as a result of ribosome stalling.</text>
</comment>
<comment type="function">
    <text evidence="1">Catalyzes the release of premature peptidyl moieties from peptidyl-tRNA molecules trapped in stalled 50S ribosomal subunits, and thus maintains levels of free tRNAs and 50S ribosomes.</text>
</comment>
<comment type="catalytic activity">
    <reaction evidence="1">
        <text>an N-acyl-L-alpha-aminoacyl-tRNA + H2O = an N-acyl-L-amino acid + a tRNA + H(+)</text>
        <dbReference type="Rhea" id="RHEA:54448"/>
        <dbReference type="Rhea" id="RHEA-COMP:10123"/>
        <dbReference type="Rhea" id="RHEA-COMP:13883"/>
        <dbReference type="ChEBI" id="CHEBI:15377"/>
        <dbReference type="ChEBI" id="CHEBI:15378"/>
        <dbReference type="ChEBI" id="CHEBI:59874"/>
        <dbReference type="ChEBI" id="CHEBI:78442"/>
        <dbReference type="ChEBI" id="CHEBI:138191"/>
        <dbReference type="EC" id="3.1.1.29"/>
    </reaction>
</comment>
<comment type="subunit">
    <text evidence="1">Monomer.</text>
</comment>
<comment type="subcellular location">
    <subcellularLocation>
        <location evidence="1">Cytoplasm</location>
    </subcellularLocation>
</comment>
<comment type="similarity">
    <text evidence="1">Belongs to the PTH family.</text>
</comment>
<sequence>MSNTWLVVGLGNPGPDYSHTRHNIGFMVAEELASRIGASFKSNKSRALVAEGRLGMGGPKLVLAKPQTFMNLSGGPTSALAKFYDLGADNVIAVQDEIDIPFNTIKLKIGGGEGGHNGLRDISKALGAKEYLRVRVGVGRPPGGQGDAAGHVLKVFSTAEKKELPFLIQDAADAVELLISDGLLAAQQKFHPAK</sequence>
<gene>
    <name evidence="1" type="primary">pth</name>
    <name type="ordered locus">RSal33209_2985</name>
</gene>
<proteinExistence type="inferred from homology"/>
<feature type="chain" id="PRO_1000075351" description="Peptidyl-tRNA hydrolase">
    <location>
        <begin position="1"/>
        <end position="194"/>
    </location>
</feature>
<feature type="active site" description="Proton acceptor" evidence="1">
    <location>
        <position position="22"/>
    </location>
</feature>
<feature type="binding site" evidence="1">
    <location>
        <position position="17"/>
    </location>
    <ligand>
        <name>tRNA</name>
        <dbReference type="ChEBI" id="CHEBI:17843"/>
    </ligand>
</feature>
<feature type="binding site" evidence="1">
    <location>
        <position position="69"/>
    </location>
    <ligand>
        <name>tRNA</name>
        <dbReference type="ChEBI" id="CHEBI:17843"/>
    </ligand>
</feature>
<feature type="binding site" evidence="1">
    <location>
        <position position="71"/>
    </location>
    <ligand>
        <name>tRNA</name>
        <dbReference type="ChEBI" id="CHEBI:17843"/>
    </ligand>
</feature>
<feature type="binding site" evidence="1">
    <location>
        <position position="117"/>
    </location>
    <ligand>
        <name>tRNA</name>
        <dbReference type="ChEBI" id="CHEBI:17843"/>
    </ligand>
</feature>
<feature type="site" description="Discriminates between blocked and unblocked aminoacyl-tRNA" evidence="1">
    <location>
        <position position="12"/>
    </location>
</feature>
<feature type="site" description="Stabilizes the basic form of H active site to accept a proton" evidence="1">
    <location>
        <position position="96"/>
    </location>
</feature>
<protein>
    <recommendedName>
        <fullName evidence="1">Peptidyl-tRNA hydrolase</fullName>
        <shortName evidence="1">Pth</shortName>
        <ecNumber evidence="1">3.1.1.29</ecNumber>
    </recommendedName>
</protein>
<evidence type="ECO:0000255" key="1">
    <source>
        <dbReference type="HAMAP-Rule" id="MF_00083"/>
    </source>
</evidence>
<name>PTH_RENSM</name>
<organism>
    <name type="scientific">Renibacterium salmoninarum (strain ATCC 33209 / DSM 20767 / JCM 11484 / NBRC 15589 / NCIMB 2235)</name>
    <dbReference type="NCBI Taxonomy" id="288705"/>
    <lineage>
        <taxon>Bacteria</taxon>
        <taxon>Bacillati</taxon>
        <taxon>Actinomycetota</taxon>
        <taxon>Actinomycetes</taxon>
        <taxon>Micrococcales</taxon>
        <taxon>Micrococcaceae</taxon>
        <taxon>Renibacterium</taxon>
    </lineage>
</organism>
<dbReference type="EC" id="3.1.1.29" evidence="1"/>
<dbReference type="EMBL" id="CP000910">
    <property type="protein sequence ID" value="ABY24707.1"/>
    <property type="molecule type" value="Genomic_DNA"/>
</dbReference>
<dbReference type="RefSeq" id="WP_012246352.1">
    <property type="nucleotide sequence ID" value="NC_010168.1"/>
</dbReference>
<dbReference type="SMR" id="A9WU36"/>
<dbReference type="STRING" id="288705.RSal33209_2985"/>
<dbReference type="KEGG" id="rsa:RSal33209_2985"/>
<dbReference type="eggNOG" id="COG0193">
    <property type="taxonomic scope" value="Bacteria"/>
</dbReference>
<dbReference type="HOGENOM" id="CLU_062456_2_2_11"/>
<dbReference type="Proteomes" id="UP000002007">
    <property type="component" value="Chromosome"/>
</dbReference>
<dbReference type="GO" id="GO:0005737">
    <property type="term" value="C:cytoplasm"/>
    <property type="evidence" value="ECO:0007669"/>
    <property type="project" value="UniProtKB-SubCell"/>
</dbReference>
<dbReference type="GO" id="GO:0004045">
    <property type="term" value="F:peptidyl-tRNA hydrolase activity"/>
    <property type="evidence" value="ECO:0007669"/>
    <property type="project" value="UniProtKB-UniRule"/>
</dbReference>
<dbReference type="GO" id="GO:0000049">
    <property type="term" value="F:tRNA binding"/>
    <property type="evidence" value="ECO:0007669"/>
    <property type="project" value="UniProtKB-UniRule"/>
</dbReference>
<dbReference type="GO" id="GO:0006515">
    <property type="term" value="P:protein quality control for misfolded or incompletely synthesized proteins"/>
    <property type="evidence" value="ECO:0007669"/>
    <property type="project" value="UniProtKB-UniRule"/>
</dbReference>
<dbReference type="GO" id="GO:0072344">
    <property type="term" value="P:rescue of stalled ribosome"/>
    <property type="evidence" value="ECO:0007669"/>
    <property type="project" value="UniProtKB-UniRule"/>
</dbReference>
<dbReference type="CDD" id="cd00462">
    <property type="entry name" value="PTH"/>
    <property type="match status" value="1"/>
</dbReference>
<dbReference type="FunFam" id="3.40.50.1470:FF:000001">
    <property type="entry name" value="Peptidyl-tRNA hydrolase"/>
    <property type="match status" value="1"/>
</dbReference>
<dbReference type="Gene3D" id="3.40.50.1470">
    <property type="entry name" value="Peptidyl-tRNA hydrolase"/>
    <property type="match status" value="1"/>
</dbReference>
<dbReference type="HAMAP" id="MF_00083">
    <property type="entry name" value="Pept_tRNA_hydro_bact"/>
    <property type="match status" value="1"/>
</dbReference>
<dbReference type="InterPro" id="IPR001328">
    <property type="entry name" value="Pept_tRNA_hydro"/>
</dbReference>
<dbReference type="InterPro" id="IPR018171">
    <property type="entry name" value="Pept_tRNA_hydro_CS"/>
</dbReference>
<dbReference type="InterPro" id="IPR036416">
    <property type="entry name" value="Pept_tRNA_hydro_sf"/>
</dbReference>
<dbReference type="NCBIfam" id="TIGR00447">
    <property type="entry name" value="pth"/>
    <property type="match status" value="1"/>
</dbReference>
<dbReference type="PANTHER" id="PTHR17224">
    <property type="entry name" value="PEPTIDYL-TRNA HYDROLASE"/>
    <property type="match status" value="1"/>
</dbReference>
<dbReference type="PANTHER" id="PTHR17224:SF1">
    <property type="entry name" value="PEPTIDYL-TRNA HYDROLASE"/>
    <property type="match status" value="1"/>
</dbReference>
<dbReference type="Pfam" id="PF01195">
    <property type="entry name" value="Pept_tRNA_hydro"/>
    <property type="match status" value="1"/>
</dbReference>
<dbReference type="SUPFAM" id="SSF53178">
    <property type="entry name" value="Peptidyl-tRNA hydrolase-like"/>
    <property type="match status" value="1"/>
</dbReference>
<dbReference type="PROSITE" id="PS01195">
    <property type="entry name" value="PEPT_TRNA_HYDROL_1"/>
    <property type="match status" value="1"/>
</dbReference>
<dbReference type="PROSITE" id="PS01196">
    <property type="entry name" value="PEPT_TRNA_HYDROL_2"/>
    <property type="match status" value="1"/>
</dbReference>
<reference key="1">
    <citation type="journal article" date="2008" name="J. Bacteriol.">
        <title>Genome sequence of the fish pathogen Renibacterium salmoninarum suggests reductive evolution away from an environmental Arthrobacter ancestor.</title>
        <authorList>
            <person name="Wiens G.D."/>
            <person name="Rockey D.D."/>
            <person name="Wu Z."/>
            <person name="Chang J."/>
            <person name="Levy R."/>
            <person name="Crane S."/>
            <person name="Chen D.S."/>
            <person name="Capri G.R."/>
            <person name="Burnett J.R."/>
            <person name="Sudheesh P.S."/>
            <person name="Schipma M.J."/>
            <person name="Burd H."/>
            <person name="Bhattacharyya A."/>
            <person name="Rhodes L.D."/>
            <person name="Kaul R."/>
            <person name="Strom M.S."/>
        </authorList>
    </citation>
    <scope>NUCLEOTIDE SEQUENCE [LARGE SCALE GENOMIC DNA]</scope>
    <source>
        <strain>ATCC 33209 / DSM 20767 / JCM 11484 / NBRC 15589 / NCIMB 2235</strain>
    </source>
</reference>
<keyword id="KW-0963">Cytoplasm</keyword>
<keyword id="KW-0378">Hydrolase</keyword>
<keyword id="KW-1185">Reference proteome</keyword>
<keyword id="KW-0694">RNA-binding</keyword>
<keyword id="KW-0820">tRNA-binding</keyword>
<accession>A9WU36</accession>